<feature type="chain" id="PRO_0000253067" description="Putative membrane protein insertion efficiency factor">
    <location>
        <begin position="1"/>
        <end position="88"/>
    </location>
</feature>
<evidence type="ECO:0000255" key="1">
    <source>
        <dbReference type="HAMAP-Rule" id="MF_00386"/>
    </source>
</evidence>
<comment type="function">
    <text evidence="1">Could be involved in insertion of integral membrane proteins into the membrane.</text>
</comment>
<comment type="subcellular location">
    <subcellularLocation>
        <location evidence="1">Cell inner membrane</location>
        <topology evidence="1">Peripheral membrane protein</topology>
        <orientation evidence="1">Cytoplasmic side</orientation>
    </subcellularLocation>
</comment>
<comment type="similarity">
    <text evidence="1">Belongs to the UPF0161 family.</text>
</comment>
<proteinExistence type="inferred from homology"/>
<reference key="1">
    <citation type="journal article" date="2009" name="Appl. Environ. Microbiol.">
        <title>Three genomes from the phylum Acidobacteria provide insight into the lifestyles of these microorganisms in soils.</title>
        <authorList>
            <person name="Ward N.L."/>
            <person name="Challacombe J.F."/>
            <person name="Janssen P.H."/>
            <person name="Henrissat B."/>
            <person name="Coutinho P.M."/>
            <person name="Wu M."/>
            <person name="Xie G."/>
            <person name="Haft D.H."/>
            <person name="Sait M."/>
            <person name="Badger J."/>
            <person name="Barabote R.D."/>
            <person name="Bradley B."/>
            <person name="Brettin T.S."/>
            <person name="Brinkac L.M."/>
            <person name="Bruce D."/>
            <person name="Creasy T."/>
            <person name="Daugherty S.C."/>
            <person name="Davidsen T.M."/>
            <person name="DeBoy R.T."/>
            <person name="Detter J.C."/>
            <person name="Dodson R.J."/>
            <person name="Durkin A.S."/>
            <person name="Ganapathy A."/>
            <person name="Gwinn-Giglio M."/>
            <person name="Han C.S."/>
            <person name="Khouri H."/>
            <person name="Kiss H."/>
            <person name="Kothari S.P."/>
            <person name="Madupu R."/>
            <person name="Nelson K.E."/>
            <person name="Nelson W.C."/>
            <person name="Paulsen I."/>
            <person name="Penn K."/>
            <person name="Ren Q."/>
            <person name="Rosovitz M.J."/>
            <person name="Selengut J.D."/>
            <person name="Shrivastava S."/>
            <person name="Sullivan S.A."/>
            <person name="Tapia R."/>
            <person name="Thompson L.S."/>
            <person name="Watkins K.L."/>
            <person name="Yang Q."/>
            <person name="Yu C."/>
            <person name="Zafar N."/>
            <person name="Zhou L."/>
            <person name="Kuske C.R."/>
        </authorList>
    </citation>
    <scope>NUCLEOTIDE SEQUENCE [LARGE SCALE GENOMIC DNA]</scope>
    <source>
        <strain>Ellin345</strain>
    </source>
</reference>
<gene>
    <name type="ordered locus">Acid345_0218</name>
</gene>
<accession>Q1IV77</accession>
<protein>
    <recommendedName>
        <fullName evidence="1">Putative membrane protein insertion efficiency factor</fullName>
    </recommendedName>
</protein>
<keyword id="KW-0997">Cell inner membrane</keyword>
<keyword id="KW-1003">Cell membrane</keyword>
<keyword id="KW-0472">Membrane</keyword>
<keyword id="KW-1185">Reference proteome</keyword>
<organism>
    <name type="scientific">Koribacter versatilis (strain Ellin345)</name>
    <dbReference type="NCBI Taxonomy" id="204669"/>
    <lineage>
        <taxon>Bacteria</taxon>
        <taxon>Pseudomonadati</taxon>
        <taxon>Acidobacteriota</taxon>
        <taxon>Terriglobia</taxon>
        <taxon>Terriglobales</taxon>
        <taxon>Candidatus Korobacteraceae</taxon>
        <taxon>Candidatus Korobacter</taxon>
    </lineage>
</organism>
<sequence>MKAVLVQMLKGYKRWISPLLPVSCRYVPTCSEYAMEAISIHGAVRGSVLALGRLLRCHPFVRGGYDPVPRSHSCCDDKISTTAHDAVR</sequence>
<name>YIDD_KORVE</name>
<dbReference type="EMBL" id="CP000360">
    <property type="protein sequence ID" value="ABF39223.1"/>
    <property type="molecule type" value="Genomic_DNA"/>
</dbReference>
<dbReference type="RefSeq" id="WP_011521025.1">
    <property type="nucleotide sequence ID" value="NC_008009.1"/>
</dbReference>
<dbReference type="STRING" id="204669.Acid345_0218"/>
<dbReference type="EnsemblBacteria" id="ABF39223">
    <property type="protein sequence ID" value="ABF39223"/>
    <property type="gene ID" value="Acid345_0218"/>
</dbReference>
<dbReference type="KEGG" id="aba:Acid345_0218"/>
<dbReference type="eggNOG" id="COG0759">
    <property type="taxonomic scope" value="Bacteria"/>
</dbReference>
<dbReference type="HOGENOM" id="CLU_144811_6_0_0"/>
<dbReference type="OrthoDB" id="9801753at2"/>
<dbReference type="Proteomes" id="UP000002432">
    <property type="component" value="Chromosome"/>
</dbReference>
<dbReference type="GO" id="GO:0005886">
    <property type="term" value="C:plasma membrane"/>
    <property type="evidence" value="ECO:0007669"/>
    <property type="project" value="UniProtKB-SubCell"/>
</dbReference>
<dbReference type="HAMAP" id="MF_00386">
    <property type="entry name" value="UPF0161_YidD"/>
    <property type="match status" value="1"/>
</dbReference>
<dbReference type="InterPro" id="IPR002696">
    <property type="entry name" value="Membr_insert_effic_factor_YidD"/>
</dbReference>
<dbReference type="NCBIfam" id="TIGR00278">
    <property type="entry name" value="membrane protein insertion efficiency factor YidD"/>
    <property type="match status" value="1"/>
</dbReference>
<dbReference type="PANTHER" id="PTHR33383">
    <property type="entry name" value="MEMBRANE PROTEIN INSERTION EFFICIENCY FACTOR-RELATED"/>
    <property type="match status" value="1"/>
</dbReference>
<dbReference type="PANTHER" id="PTHR33383:SF1">
    <property type="entry name" value="MEMBRANE PROTEIN INSERTION EFFICIENCY FACTOR-RELATED"/>
    <property type="match status" value="1"/>
</dbReference>
<dbReference type="Pfam" id="PF01809">
    <property type="entry name" value="YidD"/>
    <property type="match status" value="1"/>
</dbReference>
<dbReference type="SMART" id="SM01234">
    <property type="entry name" value="Haemolytic"/>
    <property type="match status" value="1"/>
</dbReference>